<gene>
    <name evidence="3" type="primary">NES</name>
    <name evidence="5" type="ORF">GLYMA_13G250400</name>
</gene>
<reference key="1">
    <citation type="journal article" date="2013" name="PLoS ONE">
        <title>Identification and characterization of a novel monoterpene synthase from soybean restricted to neryl diphosphate precursor.</title>
        <authorList>
            <person name="Zhang M."/>
            <person name="Liu J."/>
            <person name="Li K."/>
            <person name="Yu D."/>
        </authorList>
    </citation>
    <scope>NUCLEOTIDE SEQUENCE [MRNA]</scope>
    <scope>FUNCTION</scope>
    <scope>CATALYTIC ACTIVITY</scope>
    <scope>SUBCELLULAR LOCATION</scope>
    <scope>INDUCTION</scope>
</reference>
<reference key="2">
    <citation type="journal article" date="2010" name="Nature">
        <title>Genome sequence of the palaeopolyploid soybean.</title>
        <authorList>
            <person name="Schmutz J."/>
            <person name="Cannon S.B."/>
            <person name="Schlueter J."/>
            <person name="Ma J."/>
            <person name="Mitros T."/>
            <person name="Nelson W."/>
            <person name="Hyten D.L."/>
            <person name="Song Q."/>
            <person name="Thelen J.J."/>
            <person name="Cheng J."/>
            <person name="Xu D."/>
            <person name="Hellsten U."/>
            <person name="May G.D."/>
            <person name="Yu Y."/>
            <person name="Sakurai T."/>
            <person name="Umezawa T."/>
            <person name="Bhattacharyya M.K."/>
            <person name="Sandhu D."/>
            <person name="Valliyodan B."/>
            <person name="Lindquist E."/>
            <person name="Peto M."/>
            <person name="Grant D."/>
            <person name="Shu S."/>
            <person name="Goodstein D."/>
            <person name="Barry K."/>
            <person name="Futrell-Griggs M."/>
            <person name="Abernathy B."/>
            <person name="Du J."/>
            <person name="Tian Z."/>
            <person name="Zhu L."/>
            <person name="Gill N."/>
            <person name="Joshi T."/>
            <person name="Libault M."/>
            <person name="Sethuraman A."/>
            <person name="Zhang X.-C."/>
            <person name="Shinozaki K."/>
            <person name="Nguyen H.T."/>
            <person name="Wing R.A."/>
            <person name="Cregan P."/>
            <person name="Specht J."/>
            <person name="Grimwood J."/>
            <person name="Rokhsar D."/>
            <person name="Stacey G."/>
            <person name="Shoemaker R.C."/>
            <person name="Jackson S.A."/>
        </authorList>
    </citation>
    <scope>NUCLEOTIDE SEQUENCE [LARGE SCALE GENOMIC DNA]</scope>
    <source>
        <strain>cv. Williams 82</strain>
    </source>
</reference>
<dbReference type="EC" id="3.1.7.13" evidence="2"/>
<dbReference type="EMBL" id="JF758895">
    <property type="protein sequence ID" value="AEE92791.1"/>
    <property type="molecule type" value="mRNA"/>
</dbReference>
<dbReference type="EMBL" id="CM000846">
    <property type="protein sequence ID" value="KRH21637.1"/>
    <property type="molecule type" value="Genomic_DNA"/>
</dbReference>
<dbReference type="RefSeq" id="NP_001276223.2">
    <property type="nucleotide sequence ID" value="NM_001289294.2"/>
</dbReference>
<dbReference type="SMR" id="I1M2G5"/>
<dbReference type="STRING" id="3847.I1M2G5"/>
<dbReference type="PaxDb" id="3847-GLYMA13G32380.1"/>
<dbReference type="EnsemblPlants" id="KRH21637">
    <property type="protein sequence ID" value="KRH21637"/>
    <property type="gene ID" value="GLYMA_13G250400"/>
</dbReference>
<dbReference type="GeneID" id="100789381"/>
<dbReference type="Gramene" id="KRH21637">
    <property type="protein sequence ID" value="KRH21637"/>
    <property type="gene ID" value="GLYMA_13G250400"/>
</dbReference>
<dbReference type="KEGG" id="gmx:100789381"/>
<dbReference type="eggNOG" id="ENOG502QTGK">
    <property type="taxonomic scope" value="Eukaryota"/>
</dbReference>
<dbReference type="HOGENOM" id="CLU_003125_7_1_1"/>
<dbReference type="InParanoid" id="I1M2G5"/>
<dbReference type="OMA" id="RHREHHE"/>
<dbReference type="OrthoDB" id="1396482at2759"/>
<dbReference type="BRENDA" id="3.7.1.27">
    <property type="organism ID" value="2483"/>
</dbReference>
<dbReference type="UniPathway" id="UPA00213"/>
<dbReference type="Proteomes" id="UP000008827">
    <property type="component" value="Chromosome 13"/>
</dbReference>
<dbReference type="ExpressionAtlas" id="I1M2G5">
    <property type="expression patterns" value="baseline and differential"/>
</dbReference>
<dbReference type="GO" id="GO:0009507">
    <property type="term" value="C:chloroplast"/>
    <property type="evidence" value="ECO:0007669"/>
    <property type="project" value="UniProtKB-SubCell"/>
</dbReference>
<dbReference type="GO" id="GO:0016787">
    <property type="term" value="F:hydrolase activity"/>
    <property type="evidence" value="ECO:0007669"/>
    <property type="project" value="UniProtKB-KW"/>
</dbReference>
<dbReference type="GO" id="GO:0000287">
    <property type="term" value="F:magnesium ion binding"/>
    <property type="evidence" value="ECO:0007669"/>
    <property type="project" value="InterPro"/>
</dbReference>
<dbReference type="GO" id="GO:0010333">
    <property type="term" value="F:terpene synthase activity"/>
    <property type="evidence" value="ECO:0007669"/>
    <property type="project" value="InterPro"/>
</dbReference>
<dbReference type="GO" id="GO:0006952">
    <property type="term" value="P:defense response"/>
    <property type="evidence" value="ECO:0007669"/>
    <property type="project" value="UniProtKB-KW"/>
</dbReference>
<dbReference type="GO" id="GO:0016114">
    <property type="term" value="P:terpenoid biosynthetic process"/>
    <property type="evidence" value="ECO:0007669"/>
    <property type="project" value="UniProtKB-UniPathway"/>
</dbReference>
<dbReference type="Gene3D" id="1.10.600.10">
    <property type="entry name" value="Farnesyl Diphosphate Synthase"/>
    <property type="match status" value="1"/>
</dbReference>
<dbReference type="Gene3D" id="1.50.10.130">
    <property type="entry name" value="Terpene synthase, N-terminal domain"/>
    <property type="match status" value="1"/>
</dbReference>
<dbReference type="InterPro" id="IPR008949">
    <property type="entry name" value="Isoprenoid_synthase_dom_sf"/>
</dbReference>
<dbReference type="InterPro" id="IPR034741">
    <property type="entry name" value="Terpene_cyclase-like_1_C"/>
</dbReference>
<dbReference type="InterPro" id="IPR001906">
    <property type="entry name" value="Terpene_synth_N"/>
</dbReference>
<dbReference type="InterPro" id="IPR036965">
    <property type="entry name" value="Terpene_synth_N_sf"/>
</dbReference>
<dbReference type="InterPro" id="IPR050148">
    <property type="entry name" value="Terpene_synthase-like"/>
</dbReference>
<dbReference type="InterPro" id="IPR005630">
    <property type="entry name" value="Terpene_synthase_metal-bd"/>
</dbReference>
<dbReference type="InterPro" id="IPR008930">
    <property type="entry name" value="Terpenoid_cyclase/PrenylTrfase"/>
</dbReference>
<dbReference type="PANTHER" id="PTHR31225:SF73">
    <property type="entry name" value="NERYL DIPHOSPHATE DIPHOSPHATASE, CHLOROPLASTIC"/>
    <property type="match status" value="1"/>
</dbReference>
<dbReference type="PANTHER" id="PTHR31225">
    <property type="entry name" value="OS04G0344100 PROTEIN-RELATED"/>
    <property type="match status" value="1"/>
</dbReference>
<dbReference type="Pfam" id="PF01397">
    <property type="entry name" value="Terpene_synth"/>
    <property type="match status" value="1"/>
</dbReference>
<dbReference type="Pfam" id="PF03936">
    <property type="entry name" value="Terpene_synth_C"/>
    <property type="match status" value="1"/>
</dbReference>
<dbReference type="SFLD" id="SFLDS00005">
    <property type="entry name" value="Isoprenoid_Synthase_Type_I"/>
    <property type="match status" value="1"/>
</dbReference>
<dbReference type="SFLD" id="SFLDG01019">
    <property type="entry name" value="Terpene_Cyclase_Like_1_C_Termi"/>
    <property type="match status" value="1"/>
</dbReference>
<dbReference type="SUPFAM" id="SSF48239">
    <property type="entry name" value="Terpenoid cyclases/Protein prenyltransferases"/>
    <property type="match status" value="1"/>
</dbReference>
<dbReference type="SUPFAM" id="SSF48576">
    <property type="entry name" value="Terpenoid synthases"/>
    <property type="match status" value="1"/>
</dbReference>
<keyword id="KW-0150">Chloroplast</keyword>
<keyword id="KW-0378">Hydrolase</keyword>
<keyword id="KW-0460">Magnesium</keyword>
<keyword id="KW-0479">Metal-binding</keyword>
<keyword id="KW-0611">Plant defense</keyword>
<keyword id="KW-0934">Plastid</keyword>
<keyword id="KW-1185">Reference proteome</keyword>
<comment type="function">
    <text evidence="2">Monoterpene synthase that catalyzes the hydrolysis of neryl diphosphate (NPP) to form nerol and diphosphate (PubMed:24124526). Is specific for NPP and has no hydrolase activity toward geranyl diphosphate (GPP) or farnesyl diphosphate (FPP) (PubMed:24124526). The monoterpene nerol may have an insect repellent effect for the plant leaves (PubMed:24124526).</text>
</comment>
<comment type="catalytic activity">
    <reaction evidence="2">
        <text>neryl diphosphate + H2O = nerol + diphosphate</text>
        <dbReference type="Rhea" id="RHEA:65828"/>
        <dbReference type="ChEBI" id="CHEBI:15377"/>
        <dbReference type="ChEBI" id="CHEBI:29452"/>
        <dbReference type="ChEBI" id="CHEBI:33019"/>
        <dbReference type="ChEBI" id="CHEBI:57665"/>
        <dbReference type="EC" id="3.1.7.13"/>
    </reaction>
    <physiologicalReaction direction="left-to-right" evidence="2">
        <dbReference type="Rhea" id="RHEA:65829"/>
    </physiologicalReaction>
</comment>
<comment type="cofactor">
    <cofactor evidence="1">
        <name>Mg(2+)</name>
        <dbReference type="ChEBI" id="CHEBI:18420"/>
    </cofactor>
    <text evidence="1">Binds 3 Mg(2+) ions per subunit.</text>
</comment>
<comment type="pathway">
    <text evidence="4">Secondary metabolite biosynthesis; terpenoid biosynthesis.</text>
</comment>
<comment type="subcellular location">
    <subcellularLocation>
        <location evidence="2">Plastid</location>
        <location evidence="2">Chloroplast</location>
    </subcellularLocation>
</comment>
<comment type="induction">
    <text evidence="2">Induced by salicylic acid (SA), wounding, and after feeding by cotton leafworm (Spodoptera litura) larvae.</text>
</comment>
<comment type="domain">
    <text evidence="4">The Asp-Asp-Xaa-Xaa-Asp/Glu (DDXXD/E) motif is important for the catalytic activity, presumably through binding to Mg(2+).</text>
</comment>
<comment type="miscellaneous">
    <text evidence="2">The growth and development of cotton leafworm was retarded when feeding on NES-overexpressing tobacco leaves.</text>
</comment>
<comment type="similarity">
    <text evidence="4">Belongs to the terpene synthase family.</text>
</comment>
<proteinExistence type="evidence at protein level"/>
<name>NES_SOYBN</name>
<accession>I1M2G5</accession>
<accession>R4HEK6</accession>
<feature type="chain" id="PRO_0000454898" description="Neryl diphosphate diphosphatase, chloroplastic">
    <location>
        <begin position="1"/>
        <end position="534"/>
    </location>
</feature>
<feature type="short sequence motif" description="DDXXD motif" evidence="4">
    <location>
        <begin position="272"/>
        <end position="276"/>
    </location>
</feature>
<feature type="binding site" evidence="1">
    <location>
        <position position="272"/>
    </location>
    <ligand>
        <name>Mg(2+)</name>
        <dbReference type="ChEBI" id="CHEBI:18420"/>
        <label>1</label>
    </ligand>
</feature>
<feature type="binding site" evidence="1">
    <location>
        <position position="272"/>
    </location>
    <ligand>
        <name>Mg(2+)</name>
        <dbReference type="ChEBI" id="CHEBI:18420"/>
        <label>2</label>
    </ligand>
</feature>
<feature type="binding site" evidence="1">
    <location>
        <position position="276"/>
    </location>
    <ligand>
        <name>Mg(2+)</name>
        <dbReference type="ChEBI" id="CHEBI:18420"/>
        <label>1</label>
    </ligand>
</feature>
<feature type="binding site" evidence="1">
    <location>
        <position position="276"/>
    </location>
    <ligand>
        <name>Mg(2+)</name>
        <dbReference type="ChEBI" id="CHEBI:18420"/>
        <label>2</label>
    </ligand>
</feature>
<feature type="binding site" evidence="1">
    <location>
        <position position="416"/>
    </location>
    <ligand>
        <name>Mg(2+)</name>
        <dbReference type="ChEBI" id="CHEBI:18420"/>
        <label>3</label>
    </ligand>
</feature>
<feature type="binding site" evidence="1">
    <location>
        <position position="424"/>
    </location>
    <ligand>
        <name>Mg(2+)</name>
        <dbReference type="ChEBI" id="CHEBI:18420"/>
        <label>3</label>
    </ligand>
</feature>
<feature type="sequence conflict" description="In Ref. 1; AEE92791." evidence="4" ref="1">
    <original>Y</original>
    <variation>C</variation>
    <location>
        <position position="325"/>
    </location>
</feature>
<feature type="sequence conflict" description="In Ref. 1; AEE92791." evidence="4" ref="1">
    <original>E</original>
    <variation>G</variation>
    <location>
        <position position="447"/>
    </location>
</feature>
<sequence length="534" mass="62338">MDNIYIKQALVLKEVKHVFQKLIGEDPMESMYMVDTIQRLGIEHHFEEEIEAALQKQHLIFSSHLSDFANNHKLCEVALPFRLLRQRGHYVLADVFDNLKSNKKEFREKHGEDVKGLISLYEATQLGIEGEDSLDDAGYLCHQLLHAWLTRHEEHNEAMYVAKTLQHPLHYDLSRFRDDTSILLNDFKTKREWECLEELAEINSSIVRFVNQNEITQVYKWWKDLGLNNEVKFARYQPLKWYMWPMACFTDPRFSEQRIELTKPISLVYIIDDIFDVYGTLDQLTLFTDAIKRWELASTEQLPDFMKMCLRVLYEITNDFAEKIYKKHGFNPIETLKRSWVRLLNAFLEEAHWLNSGHLPRSAEYLNNGIVSTGVHVVLVHSFFLMDYSINNEIVAIVDNVPQIIHSVAKILRLSDDLEGAKSEDQNGLDGSYIDCYMNEHQDVSAEDAQRHVAHLISCEWKRLNREILTQNQLPSSFTNFCLNAARMVPLMYHYRSNPGLSTLQEHVKLLSNNAVAGAERHVVHILCLQFVIE</sequence>
<organism>
    <name type="scientific">Glycine max</name>
    <name type="common">Soybean</name>
    <name type="synonym">Glycine hispida</name>
    <dbReference type="NCBI Taxonomy" id="3847"/>
    <lineage>
        <taxon>Eukaryota</taxon>
        <taxon>Viridiplantae</taxon>
        <taxon>Streptophyta</taxon>
        <taxon>Embryophyta</taxon>
        <taxon>Tracheophyta</taxon>
        <taxon>Spermatophyta</taxon>
        <taxon>Magnoliopsida</taxon>
        <taxon>eudicotyledons</taxon>
        <taxon>Gunneridae</taxon>
        <taxon>Pentapetalae</taxon>
        <taxon>rosids</taxon>
        <taxon>fabids</taxon>
        <taxon>Fabales</taxon>
        <taxon>Fabaceae</taxon>
        <taxon>Papilionoideae</taxon>
        <taxon>50 kb inversion clade</taxon>
        <taxon>NPAAA clade</taxon>
        <taxon>indigoferoid/millettioid clade</taxon>
        <taxon>Phaseoleae</taxon>
        <taxon>Glycine</taxon>
        <taxon>Glycine subgen. Soja</taxon>
    </lineage>
</organism>
<protein>
    <recommendedName>
        <fullName evidence="4">Neryl diphosphate diphosphatase, chloroplastic</fullName>
        <ecNumber evidence="2">3.1.7.13</ecNumber>
    </recommendedName>
    <alternativeName>
        <fullName evidence="3">Nerol synthase</fullName>
        <shortName evidence="3">GmNES</shortName>
    </alternativeName>
</protein>
<evidence type="ECO:0000250" key="1">
    <source>
        <dbReference type="UniProtKB" id="Q40577"/>
    </source>
</evidence>
<evidence type="ECO:0000269" key="2">
    <source>
    </source>
</evidence>
<evidence type="ECO:0000303" key="3">
    <source>
    </source>
</evidence>
<evidence type="ECO:0000305" key="4"/>
<evidence type="ECO:0000312" key="5">
    <source>
        <dbReference type="EMBL" id="KRH21637.1"/>
    </source>
</evidence>